<keyword id="KW-0687">Ribonucleoprotein</keyword>
<keyword id="KW-0689">Ribosomal protein</keyword>
<keyword id="KW-0694">RNA-binding</keyword>
<keyword id="KW-0699">rRNA-binding</keyword>
<accession>B5YTN5</accession>
<feature type="chain" id="PRO_1000140961" description="Small ribosomal subunit protein uS3">
    <location>
        <begin position="1"/>
        <end position="233"/>
    </location>
</feature>
<feature type="domain" description="KH type-2" evidence="1">
    <location>
        <begin position="39"/>
        <end position="107"/>
    </location>
</feature>
<protein>
    <recommendedName>
        <fullName evidence="1">Small ribosomal subunit protein uS3</fullName>
    </recommendedName>
    <alternativeName>
        <fullName evidence="2">30S ribosomal protein S3</fullName>
    </alternativeName>
</protein>
<dbReference type="EMBL" id="CP001164">
    <property type="protein sequence ID" value="ACI39328.1"/>
    <property type="molecule type" value="Genomic_DNA"/>
</dbReference>
<dbReference type="RefSeq" id="WP_000529945.1">
    <property type="nucleotide sequence ID" value="NC_011353.1"/>
</dbReference>
<dbReference type="SMR" id="B5YTN5"/>
<dbReference type="GeneID" id="97603663"/>
<dbReference type="KEGG" id="ecf:ECH74115_4637"/>
<dbReference type="HOGENOM" id="CLU_058591_0_2_6"/>
<dbReference type="GO" id="GO:0022627">
    <property type="term" value="C:cytosolic small ribosomal subunit"/>
    <property type="evidence" value="ECO:0007669"/>
    <property type="project" value="TreeGrafter"/>
</dbReference>
<dbReference type="GO" id="GO:0003729">
    <property type="term" value="F:mRNA binding"/>
    <property type="evidence" value="ECO:0007669"/>
    <property type="project" value="UniProtKB-UniRule"/>
</dbReference>
<dbReference type="GO" id="GO:0019843">
    <property type="term" value="F:rRNA binding"/>
    <property type="evidence" value="ECO:0007669"/>
    <property type="project" value="UniProtKB-UniRule"/>
</dbReference>
<dbReference type="GO" id="GO:0003735">
    <property type="term" value="F:structural constituent of ribosome"/>
    <property type="evidence" value="ECO:0007669"/>
    <property type="project" value="InterPro"/>
</dbReference>
<dbReference type="GO" id="GO:0006412">
    <property type="term" value="P:translation"/>
    <property type="evidence" value="ECO:0007669"/>
    <property type="project" value="UniProtKB-UniRule"/>
</dbReference>
<dbReference type="CDD" id="cd02412">
    <property type="entry name" value="KH-II_30S_S3"/>
    <property type="match status" value="1"/>
</dbReference>
<dbReference type="FunFam" id="3.30.1140.32:FF:000001">
    <property type="entry name" value="30S ribosomal protein S3"/>
    <property type="match status" value="1"/>
</dbReference>
<dbReference type="FunFam" id="3.30.300.20:FF:000001">
    <property type="entry name" value="30S ribosomal protein S3"/>
    <property type="match status" value="1"/>
</dbReference>
<dbReference type="Gene3D" id="3.30.300.20">
    <property type="match status" value="1"/>
</dbReference>
<dbReference type="Gene3D" id="3.30.1140.32">
    <property type="entry name" value="Ribosomal protein S3, C-terminal domain"/>
    <property type="match status" value="1"/>
</dbReference>
<dbReference type="HAMAP" id="MF_01309_B">
    <property type="entry name" value="Ribosomal_uS3_B"/>
    <property type="match status" value="1"/>
</dbReference>
<dbReference type="InterPro" id="IPR004087">
    <property type="entry name" value="KH_dom"/>
</dbReference>
<dbReference type="InterPro" id="IPR015946">
    <property type="entry name" value="KH_dom-like_a/b"/>
</dbReference>
<dbReference type="InterPro" id="IPR004044">
    <property type="entry name" value="KH_dom_type_2"/>
</dbReference>
<dbReference type="InterPro" id="IPR009019">
    <property type="entry name" value="KH_sf_prok-type"/>
</dbReference>
<dbReference type="InterPro" id="IPR036419">
    <property type="entry name" value="Ribosomal_S3_C_sf"/>
</dbReference>
<dbReference type="InterPro" id="IPR005704">
    <property type="entry name" value="Ribosomal_uS3_bac-typ"/>
</dbReference>
<dbReference type="InterPro" id="IPR001351">
    <property type="entry name" value="Ribosomal_uS3_C"/>
</dbReference>
<dbReference type="InterPro" id="IPR018280">
    <property type="entry name" value="Ribosomal_uS3_CS"/>
</dbReference>
<dbReference type="NCBIfam" id="TIGR01009">
    <property type="entry name" value="rpsC_bact"/>
    <property type="match status" value="1"/>
</dbReference>
<dbReference type="PANTHER" id="PTHR11760">
    <property type="entry name" value="30S/40S RIBOSOMAL PROTEIN S3"/>
    <property type="match status" value="1"/>
</dbReference>
<dbReference type="PANTHER" id="PTHR11760:SF19">
    <property type="entry name" value="SMALL RIBOSOMAL SUBUNIT PROTEIN US3C"/>
    <property type="match status" value="1"/>
</dbReference>
<dbReference type="Pfam" id="PF07650">
    <property type="entry name" value="KH_2"/>
    <property type="match status" value="1"/>
</dbReference>
<dbReference type="Pfam" id="PF00189">
    <property type="entry name" value="Ribosomal_S3_C"/>
    <property type="match status" value="1"/>
</dbReference>
<dbReference type="SMART" id="SM00322">
    <property type="entry name" value="KH"/>
    <property type="match status" value="1"/>
</dbReference>
<dbReference type="SUPFAM" id="SSF54814">
    <property type="entry name" value="Prokaryotic type KH domain (KH-domain type II)"/>
    <property type="match status" value="1"/>
</dbReference>
<dbReference type="SUPFAM" id="SSF54821">
    <property type="entry name" value="Ribosomal protein S3 C-terminal domain"/>
    <property type="match status" value="1"/>
</dbReference>
<dbReference type="PROSITE" id="PS50823">
    <property type="entry name" value="KH_TYPE_2"/>
    <property type="match status" value="1"/>
</dbReference>
<dbReference type="PROSITE" id="PS00548">
    <property type="entry name" value="RIBOSOMAL_S3"/>
    <property type="match status" value="1"/>
</dbReference>
<evidence type="ECO:0000255" key="1">
    <source>
        <dbReference type="HAMAP-Rule" id="MF_01309"/>
    </source>
</evidence>
<evidence type="ECO:0000305" key="2"/>
<name>RS3_ECO5E</name>
<organism>
    <name type="scientific">Escherichia coli O157:H7 (strain EC4115 / EHEC)</name>
    <dbReference type="NCBI Taxonomy" id="444450"/>
    <lineage>
        <taxon>Bacteria</taxon>
        <taxon>Pseudomonadati</taxon>
        <taxon>Pseudomonadota</taxon>
        <taxon>Gammaproteobacteria</taxon>
        <taxon>Enterobacterales</taxon>
        <taxon>Enterobacteriaceae</taxon>
        <taxon>Escherichia</taxon>
    </lineage>
</organism>
<comment type="function">
    <text evidence="1">Binds the lower part of the 30S subunit head. Binds mRNA in the 70S ribosome, positioning it for translation.</text>
</comment>
<comment type="subunit">
    <text evidence="1">Part of the 30S ribosomal subunit. Forms a tight complex with proteins S10 and S14.</text>
</comment>
<comment type="similarity">
    <text evidence="1">Belongs to the universal ribosomal protein uS3 family.</text>
</comment>
<reference key="1">
    <citation type="journal article" date="2011" name="Proc. Natl. Acad. Sci. U.S.A.">
        <title>Genomic anatomy of Escherichia coli O157:H7 outbreaks.</title>
        <authorList>
            <person name="Eppinger M."/>
            <person name="Mammel M.K."/>
            <person name="Leclerc J.E."/>
            <person name="Ravel J."/>
            <person name="Cebula T.A."/>
        </authorList>
    </citation>
    <scope>NUCLEOTIDE SEQUENCE [LARGE SCALE GENOMIC DNA]</scope>
    <source>
        <strain>EC4115 / EHEC</strain>
    </source>
</reference>
<sequence>MGQKVHPNGIRLGIVKPWNSTWFANTKEFADNLDSDFKVRQYLTKELAKASVSRIVIERPAKSIRVTIHTARPGIVIGKKGEDVEKLRKVVADIAGVPAQINIAEVRKPELDAKLVADSITSQLERRVMFRRAMKRAVQNAMRLGAKGIKVEVSGRLGGAEIARTEWYREGRVPLHTLRADIDYNTSEAHTTYGVIGVKVWIFKGEILGGMAAVEQPEKPAAQPKKQQRKGRK</sequence>
<proteinExistence type="inferred from homology"/>
<gene>
    <name evidence="1" type="primary">rpsC</name>
    <name type="ordered locus">ECH74115_4637</name>
</gene>